<evidence type="ECO:0000255" key="1">
    <source>
        <dbReference type="HAMAP-Rule" id="MF_01694"/>
    </source>
</evidence>
<evidence type="ECO:0000255" key="2">
    <source>
        <dbReference type="PROSITE-ProRule" id="PRU01266"/>
    </source>
</evidence>
<proteinExistence type="inferred from homology"/>
<sequence length="332" mass="36701">MPNWLSLAEQVMEGYELADEEALAILDCPDDELLLLLQGAYRIRSVYYGNKVKLNMIMNAKSGLCPENCGYCSQSAVATAPVKTYKMLDKETLLRGAEEAYRLQIGTYCIVASGRGPSDKEVDIVVSAVKEIKERFGLKVCACLGLLKPEQAARLKEAGVDRYNHNINTSKQHHPNITTSHTYDDRVRTVETVKEAGLSPCSGVIIGMKETKQDIVDMARSLRELDADSIPVNFLHAIDGTPLAGTNELNPRYCLKVLALFRYMNPTKEIRIAGGREVNLRSLQPLGLYAANSIFVGDYLTTLGQEKSADYKMLEDLGFEIEFSPAPQIGVV</sequence>
<name>BIOB_GEOTN</name>
<dbReference type="EC" id="2.8.1.6" evidence="1"/>
<dbReference type="EMBL" id="CP000557">
    <property type="protein sequence ID" value="ABO66788.1"/>
    <property type="molecule type" value="Genomic_DNA"/>
</dbReference>
<dbReference type="RefSeq" id="WP_008879291.1">
    <property type="nucleotide sequence ID" value="NC_009328.1"/>
</dbReference>
<dbReference type="SMR" id="A4IN84"/>
<dbReference type="KEGG" id="gtn:GTNG_1418"/>
<dbReference type="eggNOG" id="COG0502">
    <property type="taxonomic scope" value="Bacteria"/>
</dbReference>
<dbReference type="HOGENOM" id="CLU_033172_2_1_9"/>
<dbReference type="UniPathway" id="UPA00078">
    <property type="reaction ID" value="UER00162"/>
</dbReference>
<dbReference type="Proteomes" id="UP000001578">
    <property type="component" value="Chromosome"/>
</dbReference>
<dbReference type="GO" id="GO:0051537">
    <property type="term" value="F:2 iron, 2 sulfur cluster binding"/>
    <property type="evidence" value="ECO:0007669"/>
    <property type="project" value="UniProtKB-KW"/>
</dbReference>
<dbReference type="GO" id="GO:0051539">
    <property type="term" value="F:4 iron, 4 sulfur cluster binding"/>
    <property type="evidence" value="ECO:0007669"/>
    <property type="project" value="UniProtKB-KW"/>
</dbReference>
<dbReference type="GO" id="GO:0004076">
    <property type="term" value="F:biotin synthase activity"/>
    <property type="evidence" value="ECO:0007669"/>
    <property type="project" value="UniProtKB-UniRule"/>
</dbReference>
<dbReference type="GO" id="GO:0005506">
    <property type="term" value="F:iron ion binding"/>
    <property type="evidence" value="ECO:0007669"/>
    <property type="project" value="UniProtKB-UniRule"/>
</dbReference>
<dbReference type="GO" id="GO:0009102">
    <property type="term" value="P:biotin biosynthetic process"/>
    <property type="evidence" value="ECO:0007669"/>
    <property type="project" value="UniProtKB-UniRule"/>
</dbReference>
<dbReference type="CDD" id="cd01335">
    <property type="entry name" value="Radical_SAM"/>
    <property type="match status" value="1"/>
</dbReference>
<dbReference type="FunFam" id="3.20.20.70:FF:000026">
    <property type="entry name" value="Biotin synthase"/>
    <property type="match status" value="1"/>
</dbReference>
<dbReference type="Gene3D" id="3.20.20.70">
    <property type="entry name" value="Aldolase class I"/>
    <property type="match status" value="1"/>
</dbReference>
<dbReference type="HAMAP" id="MF_01694">
    <property type="entry name" value="BioB"/>
    <property type="match status" value="1"/>
</dbReference>
<dbReference type="InterPro" id="IPR013785">
    <property type="entry name" value="Aldolase_TIM"/>
</dbReference>
<dbReference type="InterPro" id="IPR010722">
    <property type="entry name" value="BATS_dom"/>
</dbReference>
<dbReference type="InterPro" id="IPR002684">
    <property type="entry name" value="Biotin_synth/BioAB"/>
</dbReference>
<dbReference type="InterPro" id="IPR024177">
    <property type="entry name" value="Biotin_synthase"/>
</dbReference>
<dbReference type="InterPro" id="IPR006638">
    <property type="entry name" value="Elp3/MiaA/NifB-like_rSAM"/>
</dbReference>
<dbReference type="InterPro" id="IPR007197">
    <property type="entry name" value="rSAM"/>
</dbReference>
<dbReference type="NCBIfam" id="TIGR00433">
    <property type="entry name" value="bioB"/>
    <property type="match status" value="1"/>
</dbReference>
<dbReference type="PANTHER" id="PTHR22976">
    <property type="entry name" value="BIOTIN SYNTHASE"/>
    <property type="match status" value="1"/>
</dbReference>
<dbReference type="PANTHER" id="PTHR22976:SF2">
    <property type="entry name" value="BIOTIN SYNTHASE, MITOCHONDRIAL"/>
    <property type="match status" value="1"/>
</dbReference>
<dbReference type="Pfam" id="PF06968">
    <property type="entry name" value="BATS"/>
    <property type="match status" value="1"/>
</dbReference>
<dbReference type="Pfam" id="PF04055">
    <property type="entry name" value="Radical_SAM"/>
    <property type="match status" value="1"/>
</dbReference>
<dbReference type="PIRSF" id="PIRSF001619">
    <property type="entry name" value="Biotin_synth"/>
    <property type="match status" value="1"/>
</dbReference>
<dbReference type="SFLD" id="SFLDG01060">
    <property type="entry name" value="BATS_domain_containing"/>
    <property type="match status" value="1"/>
</dbReference>
<dbReference type="SFLD" id="SFLDG01278">
    <property type="entry name" value="biotin_synthase_like"/>
    <property type="match status" value="1"/>
</dbReference>
<dbReference type="SMART" id="SM00876">
    <property type="entry name" value="BATS"/>
    <property type="match status" value="1"/>
</dbReference>
<dbReference type="SMART" id="SM00729">
    <property type="entry name" value="Elp3"/>
    <property type="match status" value="1"/>
</dbReference>
<dbReference type="SUPFAM" id="SSF102114">
    <property type="entry name" value="Radical SAM enzymes"/>
    <property type="match status" value="1"/>
</dbReference>
<dbReference type="PROSITE" id="PS51918">
    <property type="entry name" value="RADICAL_SAM"/>
    <property type="match status" value="1"/>
</dbReference>
<keyword id="KW-0001">2Fe-2S</keyword>
<keyword id="KW-0004">4Fe-4S</keyword>
<keyword id="KW-0093">Biotin biosynthesis</keyword>
<keyword id="KW-0408">Iron</keyword>
<keyword id="KW-0411">Iron-sulfur</keyword>
<keyword id="KW-0479">Metal-binding</keyword>
<keyword id="KW-0949">S-adenosyl-L-methionine</keyword>
<keyword id="KW-0808">Transferase</keyword>
<comment type="function">
    <text evidence="1">Catalyzes the conversion of dethiobiotin (DTB) to biotin by the insertion of a sulfur atom into dethiobiotin via a radical-based mechanism.</text>
</comment>
<comment type="catalytic activity">
    <reaction evidence="1">
        <text>(4R,5S)-dethiobiotin + (sulfur carrier)-SH + 2 reduced [2Fe-2S]-[ferredoxin] + 2 S-adenosyl-L-methionine = (sulfur carrier)-H + biotin + 2 5'-deoxyadenosine + 2 L-methionine + 2 oxidized [2Fe-2S]-[ferredoxin]</text>
        <dbReference type="Rhea" id="RHEA:22060"/>
        <dbReference type="Rhea" id="RHEA-COMP:10000"/>
        <dbReference type="Rhea" id="RHEA-COMP:10001"/>
        <dbReference type="Rhea" id="RHEA-COMP:14737"/>
        <dbReference type="Rhea" id="RHEA-COMP:14739"/>
        <dbReference type="ChEBI" id="CHEBI:17319"/>
        <dbReference type="ChEBI" id="CHEBI:29917"/>
        <dbReference type="ChEBI" id="CHEBI:33737"/>
        <dbReference type="ChEBI" id="CHEBI:33738"/>
        <dbReference type="ChEBI" id="CHEBI:57586"/>
        <dbReference type="ChEBI" id="CHEBI:57844"/>
        <dbReference type="ChEBI" id="CHEBI:59789"/>
        <dbReference type="ChEBI" id="CHEBI:64428"/>
        <dbReference type="ChEBI" id="CHEBI:149473"/>
        <dbReference type="EC" id="2.8.1.6"/>
    </reaction>
</comment>
<comment type="cofactor">
    <cofactor evidence="1">
        <name>[4Fe-4S] cluster</name>
        <dbReference type="ChEBI" id="CHEBI:49883"/>
    </cofactor>
    <text evidence="1">Binds 1 [4Fe-4S] cluster. The cluster is coordinated with 3 cysteines and an exchangeable S-adenosyl-L-methionine.</text>
</comment>
<comment type="cofactor">
    <cofactor evidence="1">
        <name>[2Fe-2S] cluster</name>
        <dbReference type="ChEBI" id="CHEBI:190135"/>
    </cofactor>
    <text evidence="1">Binds 1 [2Fe-2S] cluster. The cluster is coordinated with 3 cysteines and 1 arginine.</text>
</comment>
<comment type="pathway">
    <text evidence="1">Cofactor biosynthesis; biotin biosynthesis; biotin from 7,8-diaminononanoate: step 2/2.</text>
</comment>
<comment type="subunit">
    <text evidence="1">Homodimer.</text>
</comment>
<comment type="similarity">
    <text evidence="1">Belongs to the radical SAM superfamily. Biotin synthase family.</text>
</comment>
<protein>
    <recommendedName>
        <fullName evidence="1">Biotin synthase</fullName>
        <ecNumber evidence="1">2.8.1.6</ecNumber>
    </recommendedName>
</protein>
<reference key="1">
    <citation type="journal article" date="2007" name="Proc. Natl. Acad. Sci. U.S.A.">
        <title>Genome and proteome of long-chain alkane degrading Geobacillus thermodenitrificans NG80-2 isolated from a deep-subsurface oil reservoir.</title>
        <authorList>
            <person name="Feng L."/>
            <person name="Wang W."/>
            <person name="Cheng J."/>
            <person name="Ren Y."/>
            <person name="Zhao G."/>
            <person name="Gao C."/>
            <person name="Tang Y."/>
            <person name="Liu X."/>
            <person name="Han W."/>
            <person name="Peng X."/>
            <person name="Liu R."/>
            <person name="Wang L."/>
        </authorList>
    </citation>
    <scope>NUCLEOTIDE SEQUENCE [LARGE SCALE GENOMIC DNA]</scope>
    <source>
        <strain>NG80-2</strain>
    </source>
</reference>
<accession>A4IN84</accession>
<feature type="chain" id="PRO_0000381406" description="Biotin synthase">
    <location>
        <begin position="1"/>
        <end position="332"/>
    </location>
</feature>
<feature type="domain" description="Radical SAM core" evidence="2">
    <location>
        <begin position="47"/>
        <end position="273"/>
    </location>
</feature>
<feature type="binding site" evidence="1">
    <location>
        <position position="65"/>
    </location>
    <ligand>
        <name>[4Fe-4S] cluster</name>
        <dbReference type="ChEBI" id="CHEBI:49883"/>
        <note>4Fe-4S-S-AdoMet</note>
    </ligand>
</feature>
<feature type="binding site" evidence="1">
    <location>
        <position position="69"/>
    </location>
    <ligand>
        <name>[4Fe-4S] cluster</name>
        <dbReference type="ChEBI" id="CHEBI:49883"/>
        <note>4Fe-4S-S-AdoMet</note>
    </ligand>
</feature>
<feature type="binding site" evidence="1">
    <location>
        <position position="72"/>
    </location>
    <ligand>
        <name>[4Fe-4S] cluster</name>
        <dbReference type="ChEBI" id="CHEBI:49883"/>
        <note>4Fe-4S-S-AdoMet</note>
    </ligand>
</feature>
<feature type="binding site" evidence="1">
    <location>
        <position position="109"/>
    </location>
    <ligand>
        <name>[2Fe-2S] cluster</name>
        <dbReference type="ChEBI" id="CHEBI:190135"/>
    </ligand>
</feature>
<feature type="binding site" evidence="1">
    <location>
        <position position="141"/>
    </location>
    <ligand>
        <name>[2Fe-2S] cluster</name>
        <dbReference type="ChEBI" id="CHEBI:190135"/>
    </ligand>
</feature>
<feature type="binding site" evidence="1">
    <location>
        <position position="201"/>
    </location>
    <ligand>
        <name>[2Fe-2S] cluster</name>
        <dbReference type="ChEBI" id="CHEBI:190135"/>
    </ligand>
</feature>
<feature type="binding site" evidence="1">
    <location>
        <position position="271"/>
    </location>
    <ligand>
        <name>[2Fe-2S] cluster</name>
        <dbReference type="ChEBI" id="CHEBI:190135"/>
    </ligand>
</feature>
<organism>
    <name type="scientific">Geobacillus thermodenitrificans (strain NG80-2)</name>
    <dbReference type="NCBI Taxonomy" id="420246"/>
    <lineage>
        <taxon>Bacteria</taxon>
        <taxon>Bacillati</taxon>
        <taxon>Bacillota</taxon>
        <taxon>Bacilli</taxon>
        <taxon>Bacillales</taxon>
        <taxon>Anoxybacillaceae</taxon>
        <taxon>Geobacillus</taxon>
    </lineage>
</organism>
<gene>
    <name evidence="1" type="primary">bioB</name>
    <name type="ordered locus">GTNG_1418</name>
</gene>